<accession>Q09309</accession>
<comment type="function">
    <text evidence="1 2">Required for di- and trimethylation at 'Lys-4' of histone H3. Regulates left/right asymmetry of ASE sensory neurons, via its role as a component of the SET2 complex (PubMed:21698137).</text>
</comment>
<comment type="subunit">
    <text evidence="3">Component of the SET2 complex (also known as the SET1/COMPASS complex), which contains at least set-2, swd-2.1, cfp-1, rbbp-5, wdr-5.1, dpy-30 and ash-2.</text>
</comment>
<comment type="subcellular location">
    <subcellularLocation>
        <location evidence="2">Nucleus</location>
    </subcellularLocation>
</comment>
<comment type="developmental stage">
    <text evidence="2">Expressed widely during early embryogenesis (PubMed:21698137). Expression is significantly reduced throughout the embryo after formation of the ASE neurons (PubMed:21698137). Expressed in the maternal germline (PubMed:21698137).</text>
</comment>
<comment type="disruption phenotype">
    <text evidence="1 2">Strongly reduced di- and trimethylation at 'Lys-4' of histone H3 in embryos and adult germline stem cells. Mutants also display defects in egg laying and fertility with defective germ cell development. RNAi-mediated knockdown disrupts development of the ASE left (ASEL) neuron, causing it to adopt the ASE right (ASER) cell fate (PubMed:21698137).</text>
</comment>
<reference key="1">
    <citation type="journal article" date="1998" name="Science">
        <title>Genome sequence of the nematode C. elegans: a platform for investigating biology.</title>
        <authorList>
            <consortium name="The C. elegans sequencing consortium"/>
        </authorList>
    </citation>
    <scope>NUCLEOTIDE SEQUENCE [LARGE SCALE GENOMIC DNA]</scope>
    <source>
        <strain>Bristol N2</strain>
    </source>
</reference>
<reference key="2">
    <citation type="journal article" date="2011" name="PLoS Genet.">
        <title>A role for Set1/MLL-related components in epigenetic regulation of the Caenorhabditis elegans germ line.</title>
        <authorList>
            <person name="Li T."/>
            <person name="Kelly W.G."/>
        </authorList>
    </citation>
    <scope>FUNCTION</scope>
    <scope>DISRUPTION PHENOTYPE</scope>
</reference>
<reference evidence="5" key="3">
    <citation type="journal article" date="2011" name="PLoS Genet.">
        <title>A Genome-Wide RNAi Screen for Factors Involved in Neuronal Specification in Caenorhabditis elegans.</title>
        <authorList>
            <person name="Poole R.J."/>
            <person name="Bashllari E."/>
            <person name="Cochella L."/>
            <person name="Flowers E.B."/>
            <person name="Hobert O."/>
        </authorList>
    </citation>
    <scope>FUNCTION</scope>
    <scope>DEVELOPMENTAL STAGE</scope>
    <scope>DISRUPTION PHENOTYPE</scope>
    <scope>MUTAGENESIS OF 320-TRP--LYS-454</scope>
</reference>
<reference key="4">
    <citation type="journal article" date="2019" name="Nucleic Acids Res.">
        <title>Physical and functional interaction between SET1/COMPASS complex component CFP-1 and a Sin3S HDAC complex in C. elegans.</title>
        <authorList>
            <person name="Beurton F."/>
            <person name="Stempor P."/>
            <person name="Caron M."/>
            <person name="Appert A."/>
            <person name="Dong Y."/>
            <person name="Chen R.A."/>
            <person name="Cluet D."/>
            <person name="Coute Y."/>
            <person name="Herbette M."/>
            <person name="Huang N."/>
            <person name="Polveche H."/>
            <person name="Spichty M."/>
            <person name="Bedet C."/>
            <person name="Ahringer J."/>
            <person name="Palladino F."/>
        </authorList>
    </citation>
    <scope>IDENTIFICATION IN THE SET2 COMPLEX</scope>
</reference>
<proteinExistence type="evidence at protein level"/>
<keyword id="KW-0156">Chromatin regulator</keyword>
<keyword id="KW-0539">Nucleus</keyword>
<keyword id="KW-1185">Reference proteome</keyword>
<keyword id="KW-0677">Repeat</keyword>
<keyword id="KW-0804">Transcription</keyword>
<keyword id="KW-0805">Transcription regulation</keyword>
<keyword id="KW-0853">WD repeat</keyword>
<gene>
    <name type="primary">rbbp-5</name>
    <name evidence="4" type="synonym">lsy-15</name>
    <name type="ORF">F21H12.1</name>
</gene>
<feature type="chain" id="PRO_0000051507" description="Retinoblastoma-binding protein homolog 5">
    <location>
        <begin position="1"/>
        <end position="454"/>
    </location>
</feature>
<feature type="repeat" description="WD 1">
    <location>
        <begin position="23"/>
        <end position="64"/>
    </location>
</feature>
<feature type="repeat" description="WD 2">
    <location>
        <begin position="65"/>
        <end position="104"/>
    </location>
</feature>
<feature type="repeat" description="WD 3">
    <location>
        <begin position="153"/>
        <end position="192"/>
    </location>
</feature>
<feature type="repeat" description="WD 4">
    <location>
        <begin position="196"/>
        <end position="235"/>
    </location>
</feature>
<feature type="repeat" description="WD 5">
    <location>
        <begin position="248"/>
        <end position="288"/>
    </location>
</feature>
<feature type="repeat" description="WD 6">
    <location>
        <begin position="292"/>
        <end position="330"/>
    </location>
</feature>
<feature type="mutagenesis site" description="In ot86; defects in left/right asymmetry of ASE sensory neurons." evidence="2">
    <location>
        <begin position="320"/>
        <end position="454"/>
    </location>
</feature>
<organism>
    <name type="scientific">Caenorhabditis elegans</name>
    <dbReference type="NCBI Taxonomy" id="6239"/>
    <lineage>
        <taxon>Eukaryota</taxon>
        <taxon>Metazoa</taxon>
        <taxon>Ecdysozoa</taxon>
        <taxon>Nematoda</taxon>
        <taxon>Chromadorea</taxon>
        <taxon>Rhabditida</taxon>
        <taxon>Rhabditina</taxon>
        <taxon>Rhabditomorpha</taxon>
        <taxon>Rhabditoidea</taxon>
        <taxon>Rhabditidae</taxon>
        <taxon>Peloderinae</taxon>
        <taxon>Caenorhabditis</taxon>
    </lineage>
</organism>
<evidence type="ECO:0000269" key="1">
    <source>
    </source>
</evidence>
<evidence type="ECO:0000269" key="2">
    <source>
    </source>
</evidence>
<evidence type="ECO:0000269" key="3">
    <source>
    </source>
</evidence>
<evidence type="ECO:0000303" key="4">
    <source>
    </source>
</evidence>
<evidence type="ECO:0000305" key="5"/>
<name>RBBP5_CAEEL</name>
<sequence length="454" mass="51336">MVEILDRTYGAQFPEELECHLDLQNASANCCKFNRWGSIVAVGCTDGRVLIYDFMTRNIARTFSAHCLPVSCLSWSRDGRKLLTSSADNSIAMFDVLAGTLLHRIRFNSMVTFAMFHPRNDNKAIVLQVNKQPTVEQFSPRIQTVLANDTPGSSDESASCVSYDRKGKYIIAGTGKGKLLIYNAETLKCVAWCKQNTVQQIRQIIVPMKSRFIITNTQDRVIRTYELEDLLHQRGQMVEAKYKVLDMVNKAAWKNVCTDSDGLYVCGASTKAHSLYIWESNTGSLIKILHGNKGEALLDVQWHPTRPIILSIAQGTVSMWTQAHVENWSAFAPEFQELEENEKYIEKENEFDMEDEDADEDMTSKSQDAEDDIIDVVNVRPEDYLASSDEEDCNIMKPARNLESGPLWYIPVPLDIENADNDQRLPDDIRNLDNLLNPAWVASAKGYELSPKSK</sequence>
<protein>
    <recommendedName>
        <fullName>Retinoblastoma-binding protein homolog 5</fullName>
    </recommendedName>
</protein>
<dbReference type="EMBL" id="FO080717">
    <property type="protein sequence ID" value="CCD66115.1"/>
    <property type="molecule type" value="Genomic_DNA"/>
</dbReference>
<dbReference type="PIR" id="T16130">
    <property type="entry name" value="T16130"/>
</dbReference>
<dbReference type="RefSeq" id="NP_495222.2">
    <property type="nucleotide sequence ID" value="NM_062821.8"/>
</dbReference>
<dbReference type="SMR" id="Q09309"/>
<dbReference type="BioGRID" id="39360">
    <property type="interactions" value="5"/>
</dbReference>
<dbReference type="FunCoup" id="Q09309">
    <property type="interactions" value="3263"/>
</dbReference>
<dbReference type="STRING" id="6239.F21H12.1.1"/>
<dbReference type="iPTMnet" id="Q09309"/>
<dbReference type="PaxDb" id="6239-F21H12.1"/>
<dbReference type="PeptideAtlas" id="Q09309"/>
<dbReference type="EnsemblMetazoa" id="F21H12.1.1">
    <property type="protein sequence ID" value="F21H12.1.1"/>
    <property type="gene ID" value="WBGene00017683"/>
</dbReference>
<dbReference type="GeneID" id="174019"/>
<dbReference type="KEGG" id="cel:CELE_F21H12.1"/>
<dbReference type="UCSC" id="F21H12.1">
    <property type="organism name" value="c. elegans"/>
</dbReference>
<dbReference type="AGR" id="WB:WBGene00017683"/>
<dbReference type="CTD" id="174019"/>
<dbReference type="WormBase" id="F21H12.1">
    <property type="protein sequence ID" value="CE32634"/>
    <property type="gene ID" value="WBGene00017683"/>
    <property type="gene designation" value="rbbp-5"/>
</dbReference>
<dbReference type="eggNOG" id="KOG1273">
    <property type="taxonomic scope" value="Eukaryota"/>
</dbReference>
<dbReference type="GeneTree" id="ENSGT00530000064100"/>
<dbReference type="HOGENOM" id="CLU_032142_2_2_1"/>
<dbReference type="InParanoid" id="Q09309"/>
<dbReference type="OMA" id="CWSKCGN"/>
<dbReference type="OrthoDB" id="196858at2759"/>
<dbReference type="PhylomeDB" id="Q09309"/>
<dbReference type="Reactome" id="R-CEL-3214841">
    <property type="pathway name" value="PKMTs methylate histone lysines"/>
</dbReference>
<dbReference type="Reactome" id="R-CEL-8936459">
    <property type="pathway name" value="RUNX1 regulates genes involved in megakaryocyte differentiation and platelet function"/>
</dbReference>
<dbReference type="Reactome" id="R-CEL-8951664">
    <property type="pathway name" value="Neddylation"/>
</dbReference>
<dbReference type="Reactome" id="R-CEL-9772755">
    <property type="pathway name" value="Formation of WDR5-containing histone-modifying complexes"/>
</dbReference>
<dbReference type="PRO" id="PR:Q09309"/>
<dbReference type="Proteomes" id="UP000001940">
    <property type="component" value="Chromosome II"/>
</dbReference>
<dbReference type="Bgee" id="WBGene00017683">
    <property type="expression patterns" value="Expressed in embryo and 3 other cell types or tissues"/>
</dbReference>
<dbReference type="GO" id="GO:0044666">
    <property type="term" value="C:MLL3/4 complex"/>
    <property type="evidence" value="ECO:0000314"/>
    <property type="project" value="WormBase"/>
</dbReference>
<dbReference type="GO" id="GO:0005634">
    <property type="term" value="C:nucleus"/>
    <property type="evidence" value="ECO:0000250"/>
    <property type="project" value="UniProtKB"/>
</dbReference>
<dbReference type="GO" id="GO:0048188">
    <property type="term" value="C:Set1C/COMPASS complex"/>
    <property type="evidence" value="ECO:0000318"/>
    <property type="project" value="GO_Central"/>
</dbReference>
<dbReference type="GO" id="GO:0018991">
    <property type="term" value="P:egg-laying behavior"/>
    <property type="evidence" value="ECO:0000315"/>
    <property type="project" value="UniProtKB"/>
</dbReference>
<dbReference type="GO" id="GO:0007281">
    <property type="term" value="P:germ cell development"/>
    <property type="evidence" value="ECO:0000315"/>
    <property type="project" value="UniProtKB"/>
</dbReference>
<dbReference type="GO" id="GO:0070828">
    <property type="term" value="P:heterochromatin organization"/>
    <property type="evidence" value="ECO:0000315"/>
    <property type="project" value="UniProtKB"/>
</dbReference>
<dbReference type="GO" id="GO:0012501">
    <property type="term" value="P:programmed cell death"/>
    <property type="evidence" value="ECO:0000315"/>
    <property type="project" value="UniProtKB"/>
</dbReference>
<dbReference type="GO" id="GO:0060290">
    <property type="term" value="P:transdifferentiation"/>
    <property type="evidence" value="ECO:0000315"/>
    <property type="project" value="WormBase"/>
</dbReference>
<dbReference type="FunFam" id="2.130.10.10:FF:001942">
    <property type="entry name" value="Retinoblastoma-binding protein homolog 5"/>
    <property type="match status" value="1"/>
</dbReference>
<dbReference type="Gene3D" id="2.130.10.10">
    <property type="entry name" value="YVTN repeat-like/Quinoprotein amine dehydrogenase"/>
    <property type="match status" value="1"/>
</dbReference>
<dbReference type="InterPro" id="IPR037850">
    <property type="entry name" value="RBBP5/Swd1"/>
</dbReference>
<dbReference type="InterPro" id="IPR015943">
    <property type="entry name" value="WD40/YVTN_repeat-like_dom_sf"/>
</dbReference>
<dbReference type="InterPro" id="IPR036322">
    <property type="entry name" value="WD40_repeat_dom_sf"/>
</dbReference>
<dbReference type="InterPro" id="IPR001680">
    <property type="entry name" value="WD40_rpt"/>
</dbReference>
<dbReference type="PANTHER" id="PTHR44040">
    <property type="entry name" value="RETINOBLASTOMA-BINDING PROTEIN 5"/>
    <property type="match status" value="1"/>
</dbReference>
<dbReference type="PANTHER" id="PTHR44040:SF1">
    <property type="entry name" value="RETINOBLASTOMA-BINDING PROTEIN 5"/>
    <property type="match status" value="1"/>
</dbReference>
<dbReference type="Pfam" id="PF23410">
    <property type="entry name" value="Beta-prop_VPS8"/>
    <property type="match status" value="1"/>
</dbReference>
<dbReference type="SMART" id="SM00320">
    <property type="entry name" value="WD40"/>
    <property type="match status" value="5"/>
</dbReference>
<dbReference type="SUPFAM" id="SSF50978">
    <property type="entry name" value="WD40 repeat-like"/>
    <property type="match status" value="1"/>
</dbReference>
<dbReference type="PROSITE" id="PS50082">
    <property type="entry name" value="WD_REPEATS_2"/>
    <property type="match status" value="1"/>
</dbReference>
<dbReference type="PROSITE" id="PS50294">
    <property type="entry name" value="WD_REPEATS_REGION"/>
    <property type="match status" value="1"/>
</dbReference>